<gene>
    <name type="primary">mrcA</name>
    <name type="synonym">ponA</name>
    <name type="ordered locus">NMB1807</name>
</gene>
<accession>P0A0Z6</accession>
<accession>O05194</accession>
<organism>
    <name type="scientific">Neisseria meningitidis serogroup B (strain ATCC BAA-335 / MC58)</name>
    <dbReference type="NCBI Taxonomy" id="122586"/>
    <lineage>
        <taxon>Bacteria</taxon>
        <taxon>Pseudomonadati</taxon>
        <taxon>Pseudomonadota</taxon>
        <taxon>Betaproteobacteria</taxon>
        <taxon>Neisseriales</taxon>
        <taxon>Neisseriaceae</taxon>
        <taxon>Neisseria</taxon>
    </lineage>
</organism>
<keyword id="KW-0046">Antibiotic resistance</keyword>
<keyword id="KW-0121">Carboxypeptidase</keyword>
<keyword id="KW-0997">Cell inner membrane</keyword>
<keyword id="KW-1003">Cell membrane</keyword>
<keyword id="KW-0133">Cell shape</keyword>
<keyword id="KW-0961">Cell wall biogenesis/degradation</keyword>
<keyword id="KW-0328">Glycosyltransferase</keyword>
<keyword id="KW-0378">Hydrolase</keyword>
<keyword id="KW-0472">Membrane</keyword>
<keyword id="KW-0511">Multifunctional enzyme</keyword>
<keyword id="KW-0573">Peptidoglycan synthesis</keyword>
<keyword id="KW-0645">Protease</keyword>
<keyword id="KW-1185">Reference proteome</keyword>
<keyword id="KW-0735">Signal-anchor</keyword>
<keyword id="KW-0808">Transferase</keyword>
<keyword id="KW-0812">Transmembrane</keyword>
<keyword id="KW-1133">Transmembrane helix</keyword>
<proteinExistence type="inferred from homology"/>
<feature type="chain" id="PRO_0000083172" description="Penicillin-binding protein 1A">
    <location>
        <begin position="1"/>
        <end position="798"/>
    </location>
</feature>
<feature type="topological domain" description="Cytoplasmic" evidence="4">
    <location>
        <begin position="1"/>
        <end position="9"/>
    </location>
</feature>
<feature type="transmembrane region" description="Helical; Signal-anchor for type II membrane protein" evidence="4">
    <location>
        <begin position="10"/>
        <end position="30"/>
    </location>
</feature>
<feature type="topological domain" description="Periplasmic" evidence="4">
    <location>
        <begin position="31"/>
        <end position="798"/>
    </location>
</feature>
<feature type="region of interest" description="Transglycosylase">
    <location>
        <begin position="50"/>
        <end position="218"/>
    </location>
</feature>
<feature type="region of interest" description="Transpeptidase">
    <location>
        <begin position="378"/>
        <end position="700"/>
    </location>
</feature>
<feature type="region of interest" description="Disordered" evidence="5">
    <location>
        <begin position="738"/>
        <end position="798"/>
    </location>
</feature>
<feature type="compositionally biased region" description="Basic and acidic residues" evidence="5">
    <location>
        <begin position="768"/>
        <end position="777"/>
    </location>
</feature>
<feature type="compositionally biased region" description="Polar residues" evidence="5">
    <location>
        <begin position="783"/>
        <end position="798"/>
    </location>
</feature>
<feature type="active site" description="Proton donor; for transglycosylase activity" evidence="3">
    <location>
        <position position="88"/>
    </location>
</feature>
<feature type="active site" description="Acyl-ester intermediate; for transpeptidase activity" evidence="3">
    <location>
        <position position="461"/>
    </location>
</feature>
<comment type="function">
    <text evidence="1">Cell wall formation. Synthesis of cross-linked peptidoglycan from the lipid intermediates. The enzyme has a penicillin-insensitive transglycosylase N-terminal domain (formation of linear glycan strands) and a penicillin-sensitive transpeptidase C-terminal domain (cross-linking of the peptide subunits).</text>
</comment>
<comment type="catalytic activity">
    <reaction evidence="2">
        <text>[GlcNAc-(1-&gt;4)-Mur2Ac(oyl-L-Ala-gamma-D-Glu-L-Lys-D-Ala-D-Ala)](n)-di-trans,octa-cis-undecaprenyl diphosphate + beta-D-GlcNAc-(1-&gt;4)-Mur2Ac(oyl-L-Ala-gamma-D-Glu-L-Lys-D-Ala-D-Ala)-di-trans,octa-cis-undecaprenyl diphosphate = [GlcNAc-(1-&gt;4)-Mur2Ac(oyl-L-Ala-gamma-D-Glu-L-Lys-D-Ala-D-Ala)](n+1)-di-trans,octa-cis-undecaprenyl diphosphate + di-trans,octa-cis-undecaprenyl diphosphate + H(+)</text>
        <dbReference type="Rhea" id="RHEA:23708"/>
        <dbReference type="Rhea" id="RHEA-COMP:9602"/>
        <dbReference type="Rhea" id="RHEA-COMP:9603"/>
        <dbReference type="ChEBI" id="CHEBI:15378"/>
        <dbReference type="ChEBI" id="CHEBI:58405"/>
        <dbReference type="ChEBI" id="CHEBI:60033"/>
        <dbReference type="ChEBI" id="CHEBI:78435"/>
        <dbReference type="EC" id="2.4.99.28"/>
    </reaction>
</comment>
<comment type="catalytic activity">
    <reaction evidence="2">
        <text>Preferential cleavage: (Ac)2-L-Lys-D-Ala-|-D-Ala. Also transpeptidation of peptidyl-alanyl moieties that are N-acyl substituents of D-alanine.</text>
        <dbReference type="EC" id="3.4.16.4"/>
    </reaction>
</comment>
<comment type="pathway">
    <text>Cell wall biogenesis; peptidoglycan biosynthesis.</text>
</comment>
<comment type="subcellular location">
    <subcellularLocation>
        <location evidence="1">Cell inner membrane</location>
        <topology evidence="1">Single-pass type II membrane protein</topology>
    </subcellularLocation>
</comment>
<comment type="similarity">
    <text evidence="6">In the N-terminal section; belongs to the glycosyltransferase 51 family.</text>
</comment>
<comment type="similarity">
    <text evidence="6">In the C-terminal section; belongs to the transpeptidase family.</text>
</comment>
<sequence>MIKKILTTCFGLVFGFCVFGVGLVAIAILVTYPKLPSLDSLQHYQPKMPLTIYSADGEVIGMYGEQRREFTKIGDFPEVLRNAVIAAEDKRFYRHWGVDVWGVARAAVGNVVSGSVQSGASTITQQVAKNFYLSSEKTFTRKFNEVLLAYKIEQSLSKDKILELYFNQIYLGQRAYGFASAAQIYFNKNVRDLTLAEAAMLAGLPKAPSAYNPIVNPERAKLRQKYILNNMLEEKMITVQQRDQALNEELHYERFVRKIDQSALYVAEMVRQELYEKYGEDAYTQGFKVYTTVRADHQKVATEALRKALRNFDRGSSYRGAENYIDLSKSEDVEETVSQYLSGLYTVDKMVPAVVLDVTKKKNVVIQLPGGRRVTLDRRALGFAARAVNNEKMGEDRIRRGAVIRVKNNGGRWAVVQEPLLQGALVSLDAKTGAVRALVGGYDFHSKTFNRAVQAMRQPGSTFKPFVYSAALSKGMTASTVVNDAPISLPGKGPNGSVWTPKNSDGRYSGYITLRQALTASKNMVSIRILMSIGVGYAQQYIRRFGFRSSELPASLSMALGTGETTPLKVAEAYSVFANGGYRVSSHVIDKIYDRDGRLRAQMQPLVAGQNAPQAIDPRNAYIMYKIMQDVVRVGTARGAAALGRTDIAGKTGTTNDNKDAWFVGFNPDVVTAVYIGFDKPKSMGRVGYGGTIAVPVWVDYMRFALKGKQGKGMKMPEGVVSSNGEYYMKERMVTDPGLTLDNSGIAPQPSRRAKEDDGGAAEGGRQAADDEVRQDMQETPVLPSNTGSKQQQLDSLF</sequence>
<reference key="1">
    <citation type="journal article" date="2000" name="Science">
        <title>Complete genome sequence of Neisseria meningitidis serogroup B strain MC58.</title>
        <authorList>
            <person name="Tettelin H."/>
            <person name="Saunders N.J."/>
            <person name="Heidelberg J.F."/>
            <person name="Jeffries A.C."/>
            <person name="Nelson K.E."/>
            <person name="Eisen J.A."/>
            <person name="Ketchum K.A."/>
            <person name="Hood D.W."/>
            <person name="Peden J.F."/>
            <person name="Dodson R.J."/>
            <person name="Nelson W.C."/>
            <person name="Gwinn M.L."/>
            <person name="DeBoy R.T."/>
            <person name="Peterson J.D."/>
            <person name="Hickey E.K."/>
            <person name="Haft D.H."/>
            <person name="Salzberg S.L."/>
            <person name="White O."/>
            <person name="Fleischmann R.D."/>
            <person name="Dougherty B.A."/>
            <person name="Mason T.M."/>
            <person name="Ciecko A."/>
            <person name="Parksey D.S."/>
            <person name="Blair E."/>
            <person name="Cittone H."/>
            <person name="Clark E.B."/>
            <person name="Cotton M.D."/>
            <person name="Utterback T.R."/>
            <person name="Khouri H.M."/>
            <person name="Qin H."/>
            <person name="Vamathevan J.J."/>
            <person name="Gill J."/>
            <person name="Scarlato V."/>
            <person name="Masignani V."/>
            <person name="Pizza M."/>
            <person name="Grandi G."/>
            <person name="Sun L."/>
            <person name="Smith H.O."/>
            <person name="Fraser C.M."/>
            <person name="Moxon E.R."/>
            <person name="Rappuoli R."/>
            <person name="Venter J.C."/>
        </authorList>
    </citation>
    <scope>NUCLEOTIDE SEQUENCE [LARGE SCALE GENOMIC DNA]</scope>
    <source>
        <strain>ATCC BAA-335 / MC58</strain>
    </source>
</reference>
<dbReference type="EC" id="2.4.99.28" evidence="2"/>
<dbReference type="EC" id="3.4.16.4" evidence="2"/>
<dbReference type="EMBL" id="AE002098">
    <property type="protein sequence ID" value="AAF42144.1"/>
    <property type="molecule type" value="Genomic_DNA"/>
</dbReference>
<dbReference type="PIR" id="H81040">
    <property type="entry name" value="H81040"/>
</dbReference>
<dbReference type="RefSeq" id="NP_274804.1">
    <property type="nucleotide sequence ID" value="NC_003112.2"/>
</dbReference>
<dbReference type="RefSeq" id="WP_002219786.1">
    <property type="nucleotide sequence ID" value="NC_003112.2"/>
</dbReference>
<dbReference type="SMR" id="P0A0Z6"/>
<dbReference type="FunCoup" id="P0A0Z6">
    <property type="interactions" value="281"/>
</dbReference>
<dbReference type="STRING" id="122586.NMB1807"/>
<dbReference type="CAZy" id="GT51">
    <property type="family name" value="Glycosyltransferase Family 51"/>
</dbReference>
<dbReference type="PaxDb" id="122586-NMB1807"/>
<dbReference type="KEGG" id="nme:NMB1807"/>
<dbReference type="PATRIC" id="fig|122586.8.peg.2297"/>
<dbReference type="HOGENOM" id="CLU_006354_2_4_4"/>
<dbReference type="InParanoid" id="P0A0Z6"/>
<dbReference type="OrthoDB" id="9766909at2"/>
<dbReference type="UniPathway" id="UPA00219"/>
<dbReference type="Proteomes" id="UP000000425">
    <property type="component" value="Chromosome"/>
</dbReference>
<dbReference type="GO" id="GO:0030288">
    <property type="term" value="C:outer membrane-bounded periplasmic space"/>
    <property type="evidence" value="ECO:0000318"/>
    <property type="project" value="GO_Central"/>
</dbReference>
<dbReference type="GO" id="GO:0005886">
    <property type="term" value="C:plasma membrane"/>
    <property type="evidence" value="ECO:0007669"/>
    <property type="project" value="UniProtKB-SubCell"/>
</dbReference>
<dbReference type="GO" id="GO:0008658">
    <property type="term" value="F:penicillin binding"/>
    <property type="evidence" value="ECO:0007669"/>
    <property type="project" value="InterPro"/>
</dbReference>
<dbReference type="GO" id="GO:0008955">
    <property type="term" value="F:peptidoglycan glycosyltransferase activity"/>
    <property type="evidence" value="ECO:0000318"/>
    <property type="project" value="GO_Central"/>
</dbReference>
<dbReference type="GO" id="GO:0009002">
    <property type="term" value="F:serine-type D-Ala-D-Ala carboxypeptidase activity"/>
    <property type="evidence" value="ECO:0007669"/>
    <property type="project" value="UniProtKB-EC"/>
</dbReference>
<dbReference type="GO" id="GO:0071555">
    <property type="term" value="P:cell wall organization"/>
    <property type="evidence" value="ECO:0007669"/>
    <property type="project" value="UniProtKB-KW"/>
</dbReference>
<dbReference type="GO" id="GO:0009252">
    <property type="term" value="P:peptidoglycan biosynthetic process"/>
    <property type="evidence" value="ECO:0000318"/>
    <property type="project" value="GO_Central"/>
</dbReference>
<dbReference type="GO" id="GO:0006508">
    <property type="term" value="P:proteolysis"/>
    <property type="evidence" value="ECO:0007669"/>
    <property type="project" value="UniProtKB-KW"/>
</dbReference>
<dbReference type="GO" id="GO:0008360">
    <property type="term" value="P:regulation of cell shape"/>
    <property type="evidence" value="ECO:0007669"/>
    <property type="project" value="UniProtKB-KW"/>
</dbReference>
<dbReference type="GO" id="GO:0046677">
    <property type="term" value="P:response to antibiotic"/>
    <property type="evidence" value="ECO:0007669"/>
    <property type="project" value="UniProtKB-KW"/>
</dbReference>
<dbReference type="FunFam" id="3.40.710.10:FF:000041">
    <property type="entry name" value="Penicillin-binding protein 1A"/>
    <property type="match status" value="1"/>
</dbReference>
<dbReference type="FunFam" id="1.10.3810.10:FF:000003">
    <property type="entry name" value="Penicillin-binding protein 1a"/>
    <property type="match status" value="1"/>
</dbReference>
<dbReference type="Gene3D" id="1.10.3810.10">
    <property type="entry name" value="Biosynthetic peptidoglycan transglycosylase-like"/>
    <property type="match status" value="1"/>
</dbReference>
<dbReference type="Gene3D" id="3.40.710.10">
    <property type="entry name" value="DD-peptidase/beta-lactamase superfamily"/>
    <property type="match status" value="2"/>
</dbReference>
<dbReference type="InterPro" id="IPR012338">
    <property type="entry name" value="Beta-lactam/transpept-like"/>
</dbReference>
<dbReference type="InterPro" id="IPR001264">
    <property type="entry name" value="Glyco_trans_51"/>
</dbReference>
<dbReference type="InterPro" id="IPR050396">
    <property type="entry name" value="Glycosyltr_51/Transpeptidase"/>
</dbReference>
<dbReference type="InterPro" id="IPR023346">
    <property type="entry name" value="Lysozyme-like_dom_sf"/>
</dbReference>
<dbReference type="InterPro" id="IPR036950">
    <property type="entry name" value="PBP_transglycosylase"/>
</dbReference>
<dbReference type="InterPro" id="IPR031376">
    <property type="entry name" value="PCB_OB"/>
</dbReference>
<dbReference type="InterPro" id="IPR001460">
    <property type="entry name" value="PCN-bd_Tpept"/>
</dbReference>
<dbReference type="NCBIfam" id="TIGR02074">
    <property type="entry name" value="PBP_1a_fam"/>
    <property type="match status" value="1"/>
</dbReference>
<dbReference type="PANTHER" id="PTHR32282">
    <property type="entry name" value="BINDING PROTEIN TRANSPEPTIDASE, PUTATIVE-RELATED"/>
    <property type="match status" value="1"/>
</dbReference>
<dbReference type="PANTHER" id="PTHR32282:SF27">
    <property type="entry name" value="PENICILLIN-BINDING PROTEIN 1A"/>
    <property type="match status" value="1"/>
</dbReference>
<dbReference type="Pfam" id="PF17092">
    <property type="entry name" value="PCB_OB"/>
    <property type="match status" value="1"/>
</dbReference>
<dbReference type="Pfam" id="PF00912">
    <property type="entry name" value="Transgly"/>
    <property type="match status" value="1"/>
</dbReference>
<dbReference type="Pfam" id="PF00905">
    <property type="entry name" value="Transpeptidase"/>
    <property type="match status" value="1"/>
</dbReference>
<dbReference type="SUPFAM" id="SSF56601">
    <property type="entry name" value="beta-lactamase/transpeptidase-like"/>
    <property type="match status" value="1"/>
</dbReference>
<dbReference type="SUPFAM" id="SSF53955">
    <property type="entry name" value="Lysozyme-like"/>
    <property type="match status" value="1"/>
</dbReference>
<name>PBPA_NEIMB</name>
<evidence type="ECO:0000250" key="1"/>
<evidence type="ECO:0000250" key="2">
    <source>
        <dbReference type="UniProtKB" id="P02918"/>
    </source>
</evidence>
<evidence type="ECO:0000250" key="3">
    <source>
        <dbReference type="UniProtKB" id="P02919"/>
    </source>
</evidence>
<evidence type="ECO:0000255" key="4"/>
<evidence type="ECO:0000256" key="5">
    <source>
        <dbReference type="SAM" id="MobiDB-lite"/>
    </source>
</evidence>
<evidence type="ECO:0000305" key="6"/>
<protein>
    <recommendedName>
        <fullName>Penicillin-binding protein 1A</fullName>
        <shortName>PBP-1a</shortName>
        <shortName>PBP1a</shortName>
    </recommendedName>
    <domain>
        <recommendedName>
            <fullName>Penicillin-insensitive transglycosylase</fullName>
            <ecNumber evidence="2">2.4.99.28</ecNumber>
        </recommendedName>
        <alternativeName>
            <fullName>Peptidoglycan TGase</fullName>
        </alternativeName>
    </domain>
    <domain>
        <recommendedName>
            <fullName>Penicillin-sensitive transpeptidase</fullName>
            <ecNumber evidence="2">3.4.16.4</ecNumber>
        </recommendedName>
        <alternativeName>
            <fullName>DD-transpeptidase</fullName>
        </alternativeName>
    </domain>
</protein>